<name>Y1426_METJA</name>
<proteinExistence type="predicted"/>
<protein>
    <recommendedName>
        <fullName>Uncharacterized protein MJ1426</fullName>
    </recommendedName>
</protein>
<accession>Q58821</accession>
<feature type="chain" id="PRO_0000107319" description="Uncharacterized protein MJ1426">
    <location>
        <begin position="1"/>
        <end position="168"/>
    </location>
</feature>
<feature type="domain" description="CBS 1" evidence="1">
    <location>
        <begin position="20"/>
        <end position="77"/>
    </location>
</feature>
<feature type="domain" description="CBS 2" evidence="1">
    <location>
        <begin position="117"/>
        <end position="168"/>
    </location>
</feature>
<gene>
    <name type="ordered locus">MJ1426</name>
</gene>
<keyword id="KW-0129">CBS domain</keyword>
<keyword id="KW-1185">Reference proteome</keyword>
<keyword id="KW-0677">Repeat</keyword>
<dbReference type="EMBL" id="L77117">
    <property type="protein sequence ID" value="AAB99437.1"/>
    <property type="molecule type" value="Genomic_DNA"/>
</dbReference>
<dbReference type="PIR" id="A64478">
    <property type="entry name" value="A64478"/>
</dbReference>
<dbReference type="SMR" id="Q58821"/>
<dbReference type="FunCoup" id="Q58821">
    <property type="interactions" value="6"/>
</dbReference>
<dbReference type="STRING" id="243232.MJ_1426"/>
<dbReference type="PaxDb" id="243232-MJ_1426"/>
<dbReference type="EnsemblBacteria" id="AAB99437">
    <property type="protein sequence ID" value="AAB99437"/>
    <property type="gene ID" value="MJ_1426"/>
</dbReference>
<dbReference type="KEGG" id="mja:MJ_1426"/>
<dbReference type="eggNOG" id="arCOG00606">
    <property type="taxonomic scope" value="Archaea"/>
</dbReference>
<dbReference type="HOGENOM" id="CLU_040681_9_0_2"/>
<dbReference type="InParanoid" id="Q58821"/>
<dbReference type="PhylomeDB" id="Q58821"/>
<dbReference type="Proteomes" id="UP000000805">
    <property type="component" value="Chromosome"/>
</dbReference>
<dbReference type="CDD" id="cd04586">
    <property type="entry name" value="CBS_pair_BON_assoc"/>
    <property type="match status" value="1"/>
</dbReference>
<dbReference type="Gene3D" id="3.10.580.10">
    <property type="entry name" value="CBS-domain"/>
    <property type="match status" value="1"/>
</dbReference>
<dbReference type="InterPro" id="IPR000644">
    <property type="entry name" value="CBS_dom"/>
</dbReference>
<dbReference type="InterPro" id="IPR046342">
    <property type="entry name" value="CBS_dom_sf"/>
</dbReference>
<dbReference type="InterPro" id="IPR051257">
    <property type="entry name" value="Diverse_CBS-Domain"/>
</dbReference>
<dbReference type="PANTHER" id="PTHR43080:SF2">
    <property type="entry name" value="CBS DOMAIN-CONTAINING PROTEIN"/>
    <property type="match status" value="1"/>
</dbReference>
<dbReference type="PANTHER" id="PTHR43080">
    <property type="entry name" value="CBS DOMAIN-CONTAINING PROTEIN CBSX3, MITOCHONDRIAL"/>
    <property type="match status" value="1"/>
</dbReference>
<dbReference type="Pfam" id="PF00571">
    <property type="entry name" value="CBS"/>
    <property type="match status" value="2"/>
</dbReference>
<dbReference type="SMART" id="SM00116">
    <property type="entry name" value="CBS"/>
    <property type="match status" value="2"/>
</dbReference>
<dbReference type="SUPFAM" id="SSF54631">
    <property type="entry name" value="CBS-domain pair"/>
    <property type="match status" value="1"/>
</dbReference>
<dbReference type="PROSITE" id="PS51371">
    <property type="entry name" value="CBS"/>
    <property type="match status" value="2"/>
</dbReference>
<sequence length="168" mass="18874">MRTILNKLNINGEIMLIKDIMKKPIVVYEDNDLIDVIRLFRKNKISGAPVLNKDGKLVGIISESDIVKTIVTHNEDLNLILPSPLDLIELPLKTALKIEEFMEDLKNALKTKVRDVMTRKVIVAKPDMTINDAAKLMVKNNIKRLPVVDDEGNLIGIVTRGDLIEALI</sequence>
<evidence type="ECO:0000255" key="1">
    <source>
        <dbReference type="PROSITE-ProRule" id="PRU00703"/>
    </source>
</evidence>
<reference key="1">
    <citation type="journal article" date="1996" name="Science">
        <title>Complete genome sequence of the methanogenic archaeon, Methanococcus jannaschii.</title>
        <authorList>
            <person name="Bult C.J."/>
            <person name="White O."/>
            <person name="Olsen G.J."/>
            <person name="Zhou L."/>
            <person name="Fleischmann R.D."/>
            <person name="Sutton G.G."/>
            <person name="Blake J.A."/>
            <person name="FitzGerald L.M."/>
            <person name="Clayton R.A."/>
            <person name="Gocayne J.D."/>
            <person name="Kerlavage A.R."/>
            <person name="Dougherty B.A."/>
            <person name="Tomb J.-F."/>
            <person name="Adams M.D."/>
            <person name="Reich C.I."/>
            <person name="Overbeek R."/>
            <person name="Kirkness E.F."/>
            <person name="Weinstock K.G."/>
            <person name="Merrick J.M."/>
            <person name="Glodek A."/>
            <person name="Scott J.L."/>
            <person name="Geoghagen N.S.M."/>
            <person name="Weidman J.F."/>
            <person name="Fuhrmann J.L."/>
            <person name="Nguyen D."/>
            <person name="Utterback T.R."/>
            <person name="Kelley J.M."/>
            <person name="Peterson J.D."/>
            <person name="Sadow P.W."/>
            <person name="Hanna M.C."/>
            <person name="Cotton M.D."/>
            <person name="Roberts K.M."/>
            <person name="Hurst M.A."/>
            <person name="Kaine B.P."/>
            <person name="Borodovsky M."/>
            <person name="Klenk H.-P."/>
            <person name="Fraser C.M."/>
            <person name="Smith H.O."/>
            <person name="Woese C.R."/>
            <person name="Venter J.C."/>
        </authorList>
    </citation>
    <scope>NUCLEOTIDE SEQUENCE [LARGE SCALE GENOMIC DNA]</scope>
    <source>
        <strain>ATCC 43067 / DSM 2661 / JAL-1 / JCM 10045 / NBRC 100440</strain>
    </source>
</reference>
<organism>
    <name type="scientific">Methanocaldococcus jannaschii (strain ATCC 43067 / DSM 2661 / JAL-1 / JCM 10045 / NBRC 100440)</name>
    <name type="common">Methanococcus jannaschii</name>
    <dbReference type="NCBI Taxonomy" id="243232"/>
    <lineage>
        <taxon>Archaea</taxon>
        <taxon>Methanobacteriati</taxon>
        <taxon>Methanobacteriota</taxon>
        <taxon>Methanomada group</taxon>
        <taxon>Methanococci</taxon>
        <taxon>Methanococcales</taxon>
        <taxon>Methanocaldococcaceae</taxon>
        <taxon>Methanocaldococcus</taxon>
    </lineage>
</organism>